<accession>A7Z4D5</accession>
<organism>
    <name type="scientific">Bacillus velezensis (strain DSM 23117 / BGSC 10A6 / LMG 26770 / FZB42)</name>
    <name type="common">Bacillus amyloliquefaciens subsp. plantarum</name>
    <dbReference type="NCBI Taxonomy" id="326423"/>
    <lineage>
        <taxon>Bacteria</taxon>
        <taxon>Bacillati</taxon>
        <taxon>Bacillota</taxon>
        <taxon>Bacilli</taxon>
        <taxon>Bacillales</taxon>
        <taxon>Bacillaceae</taxon>
        <taxon>Bacillus</taxon>
        <taxon>Bacillus amyloliquefaciens group</taxon>
    </lineage>
</organism>
<proteinExistence type="inferred from homology"/>
<dbReference type="EC" id="6.-.-.-" evidence="1"/>
<dbReference type="EMBL" id="CP000560">
    <property type="protein sequence ID" value="ABS73861.1"/>
    <property type="molecule type" value="Genomic_DNA"/>
</dbReference>
<dbReference type="RefSeq" id="WP_012117499.1">
    <property type="nucleotide sequence ID" value="NC_009725.2"/>
</dbReference>
<dbReference type="SMR" id="A7Z4D5"/>
<dbReference type="GeneID" id="93080631"/>
<dbReference type="KEGG" id="bay:RBAM_014980"/>
<dbReference type="HOGENOM" id="CLU_022249_1_0_9"/>
<dbReference type="Proteomes" id="UP000001120">
    <property type="component" value="Chromosome"/>
</dbReference>
<dbReference type="GO" id="GO:0016874">
    <property type="term" value="F:ligase activity"/>
    <property type="evidence" value="ECO:0007669"/>
    <property type="project" value="UniProtKB-UniRule"/>
</dbReference>
<dbReference type="HAMAP" id="MF_01867">
    <property type="entry name" value="BshC"/>
    <property type="match status" value="1"/>
</dbReference>
<dbReference type="InterPro" id="IPR011199">
    <property type="entry name" value="Bacillithiol_biosynth_BshC"/>
</dbReference>
<dbReference type="InterPro" id="IPR055399">
    <property type="entry name" value="CC_BshC"/>
</dbReference>
<dbReference type="InterPro" id="IPR055398">
    <property type="entry name" value="Rossmann-like_BshC"/>
</dbReference>
<dbReference type="NCBIfam" id="TIGR03998">
    <property type="entry name" value="thiol_BshC"/>
    <property type="match status" value="1"/>
</dbReference>
<dbReference type="Pfam" id="PF24850">
    <property type="entry name" value="CC_BshC"/>
    <property type="match status" value="1"/>
</dbReference>
<dbReference type="Pfam" id="PF10079">
    <property type="entry name" value="Rossmann-like_BshC"/>
    <property type="match status" value="1"/>
</dbReference>
<dbReference type="PIRSF" id="PIRSF012535">
    <property type="entry name" value="UCP012535"/>
    <property type="match status" value="1"/>
</dbReference>
<reference key="1">
    <citation type="journal article" date="2007" name="Nat. Biotechnol.">
        <title>Comparative analysis of the complete genome sequence of the plant growth-promoting bacterium Bacillus amyloliquefaciens FZB42.</title>
        <authorList>
            <person name="Chen X.H."/>
            <person name="Koumoutsi A."/>
            <person name="Scholz R."/>
            <person name="Eisenreich A."/>
            <person name="Schneider K."/>
            <person name="Heinemeyer I."/>
            <person name="Morgenstern B."/>
            <person name="Voss B."/>
            <person name="Hess W.R."/>
            <person name="Reva O."/>
            <person name="Junge H."/>
            <person name="Voigt B."/>
            <person name="Jungblut P.R."/>
            <person name="Vater J."/>
            <person name="Suessmuth R."/>
            <person name="Liesegang H."/>
            <person name="Strittmatter A."/>
            <person name="Gottschalk G."/>
            <person name="Borriss R."/>
        </authorList>
    </citation>
    <scope>NUCLEOTIDE SEQUENCE [LARGE SCALE GENOMIC DNA]</scope>
    <source>
        <strain>DSM 23117 / BGSC 10A6 / LMG 26770 / FZB42</strain>
    </source>
</reference>
<evidence type="ECO:0000255" key="1">
    <source>
        <dbReference type="HAMAP-Rule" id="MF_01867"/>
    </source>
</evidence>
<gene>
    <name evidence="1" type="primary">bshC</name>
    <name type="ordered locus">RBAM_014980</name>
</gene>
<feature type="chain" id="PRO_0000378206" description="Putative cysteine ligase BshC">
    <location>
        <begin position="1"/>
        <end position="539"/>
    </location>
</feature>
<feature type="coiled-coil region" evidence="1">
    <location>
        <begin position="455"/>
        <end position="475"/>
    </location>
</feature>
<keyword id="KW-0175">Coiled coil</keyword>
<keyword id="KW-0436">Ligase</keyword>
<protein>
    <recommendedName>
        <fullName evidence="1">Putative cysteine ligase BshC</fullName>
        <ecNumber evidence="1">6.-.-.-</ecNumber>
    </recommendedName>
</protein>
<comment type="function">
    <text evidence="1">Involved in bacillithiol (BSH) biosynthesis. May catalyze the last step of the pathway, the addition of cysteine to glucosamine malate (GlcN-Mal) to generate BSH.</text>
</comment>
<comment type="similarity">
    <text evidence="1">Belongs to the BshC family.</text>
</comment>
<name>BSHC_BACVZ</name>
<sequence length="539" mass="62585">MQLTELSIKSQNKFVQHYIDGENMSSFFDYDIHSEDVWQKRLHDLSSQPFAREELADYLSSYHEKFHSAAMQASIEKLRDPKSAAVVGGQQAGLLTGPLYTIHKIISIIVLARQQEEALQIPVVPIFWVAGEDHDLEEINFVHTSTENKGPVKQKLPQSYWKKTSAAKTELDQEKCAAWIDEVFAAFEETDHTNTLLQNVKRCLRSSETFTDFFELLIADLFQEEGLILMNSGDPGIKKLETGMFQQILKHNHELAKAVSDQQRLMREAGYHPIIESDKDQANLFYEHEGERFLIEKENGVFVIKELDLKWTNDELHTHMEEKPECFSNNVVTRPLMQEFLIPTLAFIAGPGEINYWGELKRAFSLMGFRMTPVVPRLNITILERHIEKKLSERNIPLQEAIEHGTGHLKDTYFEEQIPEEFSSVMEQAKSQIEAVHKRARDEALKVDSSLEPLLQKNAAFIQDQLLFLERTVTKRIEEKEGFVLRDYERIQNSIRPLGAPQERIWNVMYYLNRYGPKFFTTFKHLPFSFQNQHQIVKL</sequence>